<evidence type="ECO:0000255" key="1"/>
<evidence type="ECO:0000256" key="2">
    <source>
        <dbReference type="SAM" id="MobiDB-lite"/>
    </source>
</evidence>
<evidence type="ECO:0000269" key="3">
    <source>
    </source>
</evidence>
<evidence type="ECO:0000269" key="4">
    <source>
    </source>
</evidence>
<evidence type="ECO:0000303" key="5">
    <source>
    </source>
</evidence>
<evidence type="ECO:0000305" key="6"/>
<evidence type="ECO:0000305" key="7">
    <source>
    </source>
</evidence>
<keyword id="KW-0963">Cytoplasm</keyword>
<keyword id="KW-0272">Extracellular matrix</keyword>
<keyword id="KW-0472">Membrane</keyword>
<keyword id="KW-1185">Reference proteome</keyword>
<keyword id="KW-0964">Secreted</keyword>
<keyword id="KW-0732">Signal</keyword>
<keyword id="KW-0812">Transmembrane</keyword>
<keyword id="KW-1133">Transmembrane helix</keyword>
<gene>
    <name evidence="5 6" type="primary">Snorc</name>
</gene>
<name>SNORC_MOUSE</name>
<protein>
    <recommendedName>
        <fullName evidence="5 6">Protein SNORC</fullName>
    </recommendedName>
    <alternativeName>
        <fullName evidence="5 6">Secondary ossification center-associated regulator of chondrocyte maturation protein</fullName>
    </alternativeName>
</protein>
<organism>
    <name type="scientific">Mus musculus</name>
    <name type="common">Mouse</name>
    <dbReference type="NCBI Taxonomy" id="10090"/>
    <lineage>
        <taxon>Eukaryota</taxon>
        <taxon>Metazoa</taxon>
        <taxon>Chordata</taxon>
        <taxon>Craniata</taxon>
        <taxon>Vertebrata</taxon>
        <taxon>Euteleostomi</taxon>
        <taxon>Mammalia</taxon>
        <taxon>Eutheria</taxon>
        <taxon>Euarchontoglires</taxon>
        <taxon>Glires</taxon>
        <taxon>Rodentia</taxon>
        <taxon>Myomorpha</taxon>
        <taxon>Muroidea</taxon>
        <taxon>Muridae</taxon>
        <taxon>Murinae</taxon>
        <taxon>Mus</taxon>
        <taxon>Mus</taxon>
    </lineage>
</organism>
<dbReference type="EMBL" id="AK014261">
    <property type="protein sequence ID" value="BAB29229.1"/>
    <property type="molecule type" value="mRNA"/>
</dbReference>
<dbReference type="EMBL" id="BC115669">
    <property type="protein sequence ID" value="AAI15670.1"/>
    <property type="molecule type" value="mRNA"/>
</dbReference>
<dbReference type="EMBL" id="BC115670">
    <property type="protein sequence ID" value="AAI15671.1"/>
    <property type="molecule type" value="mRNA"/>
</dbReference>
<dbReference type="CCDS" id="CCDS48305.1"/>
<dbReference type="RefSeq" id="NP_082749.1">
    <property type="nucleotide sequence ID" value="NM_028473.3"/>
</dbReference>
<dbReference type="RefSeq" id="XP_006529958.1">
    <property type="nucleotide sequence ID" value="XM_006529895.3"/>
</dbReference>
<dbReference type="RefSeq" id="XP_036009654.1">
    <property type="nucleotide sequence ID" value="XM_036153761.1"/>
</dbReference>
<dbReference type="SMR" id="Q9CXL7"/>
<dbReference type="FunCoup" id="Q9CXL7">
    <property type="interactions" value="63"/>
</dbReference>
<dbReference type="STRING" id="10090.ENSMUSP00000027476"/>
<dbReference type="GlyGen" id="Q9CXL7">
    <property type="glycosylation" value="1 site"/>
</dbReference>
<dbReference type="iPTMnet" id="Q9CXL7"/>
<dbReference type="PhosphoSitePlus" id="Q9CXL7"/>
<dbReference type="PaxDb" id="10090-ENSMUSP00000027476"/>
<dbReference type="Antibodypedia" id="65848">
    <property type="antibodies" value="6 antibodies from 6 providers"/>
</dbReference>
<dbReference type="Ensembl" id="ENSMUST00000027476.6">
    <property type="protein sequence ID" value="ENSMUSP00000027476.5"/>
    <property type="gene ID" value="ENSMUSG00000026258.6"/>
</dbReference>
<dbReference type="GeneID" id="73234"/>
<dbReference type="KEGG" id="mmu:73234"/>
<dbReference type="UCSC" id="uc007bww.2">
    <property type="organism name" value="mouse"/>
</dbReference>
<dbReference type="AGR" id="MGI:1920484"/>
<dbReference type="CTD" id="389084"/>
<dbReference type="MGI" id="MGI:1920484">
    <property type="gene designation" value="Snorc"/>
</dbReference>
<dbReference type="VEuPathDB" id="HostDB:ENSMUSG00000026258"/>
<dbReference type="eggNOG" id="ENOG502S8U6">
    <property type="taxonomic scope" value="Eukaryota"/>
</dbReference>
<dbReference type="GeneTree" id="ENSGT00390000008993"/>
<dbReference type="HOGENOM" id="CLU_166240_0_0_1"/>
<dbReference type="InParanoid" id="Q9CXL7"/>
<dbReference type="OMA" id="WNEPIEL"/>
<dbReference type="OrthoDB" id="8941387at2759"/>
<dbReference type="PhylomeDB" id="Q9CXL7"/>
<dbReference type="TreeFam" id="TF338619"/>
<dbReference type="BioGRID-ORCS" id="73234">
    <property type="hits" value="1 hit in 79 CRISPR screens"/>
</dbReference>
<dbReference type="PRO" id="PR:Q9CXL7"/>
<dbReference type="Proteomes" id="UP000000589">
    <property type="component" value="Chromosome 1"/>
</dbReference>
<dbReference type="RNAct" id="Q9CXL7">
    <property type="molecule type" value="protein"/>
</dbReference>
<dbReference type="Bgee" id="ENSMUSG00000026258">
    <property type="expression patterns" value="Expressed in femorotibial joint and 49 other cell types or tissues"/>
</dbReference>
<dbReference type="ExpressionAtlas" id="Q9CXL7">
    <property type="expression patterns" value="baseline and differential"/>
</dbReference>
<dbReference type="GO" id="GO:0071944">
    <property type="term" value="C:cell periphery"/>
    <property type="evidence" value="ECO:0000314"/>
    <property type="project" value="UniProtKB"/>
</dbReference>
<dbReference type="GO" id="GO:0062023">
    <property type="term" value="C:collagen-containing extracellular matrix"/>
    <property type="evidence" value="ECO:0000314"/>
    <property type="project" value="UniProtKB"/>
</dbReference>
<dbReference type="GO" id="GO:0005737">
    <property type="term" value="C:cytoplasm"/>
    <property type="evidence" value="ECO:0007669"/>
    <property type="project" value="UniProtKB-SubCell"/>
</dbReference>
<dbReference type="GO" id="GO:0005576">
    <property type="term" value="C:extracellular region"/>
    <property type="evidence" value="ECO:0007669"/>
    <property type="project" value="UniProtKB-KW"/>
</dbReference>
<dbReference type="GO" id="GO:0016020">
    <property type="term" value="C:membrane"/>
    <property type="evidence" value="ECO:0007669"/>
    <property type="project" value="UniProtKB-SubCell"/>
</dbReference>
<dbReference type="GO" id="GO:0051216">
    <property type="term" value="P:cartilage development"/>
    <property type="evidence" value="ECO:0000315"/>
    <property type="project" value="UniProtKB"/>
</dbReference>
<dbReference type="InterPro" id="IPR031500">
    <property type="entry name" value="SNORC"/>
</dbReference>
<dbReference type="PANTHER" id="PTHR28453">
    <property type="entry name" value="PROTEIN SNORC"/>
    <property type="match status" value="1"/>
</dbReference>
<dbReference type="PANTHER" id="PTHR28453:SF1">
    <property type="entry name" value="PROTEIN SNORC"/>
    <property type="match status" value="1"/>
</dbReference>
<dbReference type="Pfam" id="PF15756">
    <property type="entry name" value="DUF4690"/>
    <property type="match status" value="1"/>
</dbReference>
<proteinExistence type="evidence at protein level"/>
<comment type="function">
    <text evidence="4">Plays a role in the regulation of chondrocyte maturation and postnatal endochondral ossification. May inhibit cell growth stimulation induced by FGF2.</text>
</comment>
<comment type="subunit">
    <text evidence="4">Interacts (via the extracellular domain) with FGF2.</text>
</comment>
<comment type="subcellular location">
    <subcellularLocation>
        <location evidence="7">Membrane</location>
        <topology evidence="6">Single-pass membrane protein</topology>
    </subcellularLocation>
    <subcellularLocation>
        <location evidence="3">Cytoplasm</location>
    </subcellularLocation>
    <subcellularLocation>
        <location evidence="3 4">Secreted</location>
        <location evidence="3 4">Extracellular space</location>
        <location evidence="3 4">Extracellular matrix</location>
    </subcellularLocation>
    <text evidence="3 4">Appears as reticular-like structures throughout the cytoplasm and adjacent to the plasma membrane (PubMed:21624478). In proliferation and hypertrophic chondrocytes, detected intracellulary and in the pericellular extracellular matrix. In primary spongiosa, detected only in the extracellular matrix (PubMed:28323137).</text>
</comment>
<comment type="tissue specificity">
    <text evidence="3 4">Expressed only in cartilage, including nasal, knee epiphyseal and rib tissues (PubMed:21624478). In proliferation and hypertrophic chondrocytes, detected intracellulary and in the pericellular extracellular matrix. In primary spongiosa, detected only in the extracellular matrix (PubMed:28323137).</text>
</comment>
<comment type="developmental stage">
    <text evidence="3">At 16.5 dpc and 18.5 dpc expression is cartilage specific. In tracheal and nasal cartilage, expression is seen throughout all chondrocytes at a similar intensity while in other cartilage tissues undergoing endochondral ossification, intensity is strongest in proliferating and prehypertrophic stages. In knee epiphyseal cartilage, expression is detected from 12.5 dpc onwards, with significant up-regulation at 16.5 dpc and again at postnatal day 5. Expressed at least until 10 months of age.</text>
</comment>
<comment type="induction">
    <text evidence="3">In chondrocytes, induced by BMP2.</text>
</comment>
<comment type="disruption phenotype">
    <text evidence="4">Mutants are born with the expected Mendelian frequency and show no differences in fertility, gross morphology or body weight (PubMed:28323137). Secondary ossification centers in knee epiphyses are smaller and growth plate maturation is disturbed, but total bone length is normal. Central proliferative and hypertrophic zones are enlarged with higher extracellular matrix volume and rounded chondrocyte morphology at postnatal days P10 and P22 (PubMed:28323137).</text>
</comment>
<accession>Q9CXL7</accession>
<accession>Q08EF5</accession>
<feature type="signal peptide" evidence="1">
    <location>
        <begin position="1"/>
        <end position="24"/>
    </location>
</feature>
<feature type="chain" id="PRO_0000317642" description="Protein SNORC">
    <location>
        <begin position="25"/>
        <end position="121"/>
    </location>
</feature>
<feature type="topological domain" description="Extracellular" evidence="6">
    <location>
        <begin position="25"/>
        <end position="92"/>
    </location>
</feature>
<feature type="transmembrane region" description="Helical" evidence="1">
    <location>
        <begin position="93"/>
        <end position="113"/>
    </location>
</feature>
<feature type="topological domain" description="Cytoplasmic" evidence="6">
    <location>
        <begin position="114"/>
        <end position="121"/>
    </location>
</feature>
<feature type="region of interest" description="Disordered" evidence="2">
    <location>
        <begin position="26"/>
        <end position="84"/>
    </location>
</feature>
<feature type="sequence conflict" description="In Ref. 2; AAI15670." evidence="6" ref="2">
    <location>
        <position position="25"/>
    </location>
</feature>
<sequence>MASCLALRVALLLISGVLAPAVLTAEGPQEPDPTLWNEPIELPSGEGPLESTSHNQEFAVSGPPFPTSAPAPEDSTPPARVDQDGGSLGPGAIAAIVIAALLATCVVLALVVVALRKFSAS</sequence>
<reference key="1">
    <citation type="journal article" date="2005" name="Science">
        <title>The transcriptional landscape of the mammalian genome.</title>
        <authorList>
            <person name="Carninci P."/>
            <person name="Kasukawa T."/>
            <person name="Katayama S."/>
            <person name="Gough J."/>
            <person name="Frith M.C."/>
            <person name="Maeda N."/>
            <person name="Oyama R."/>
            <person name="Ravasi T."/>
            <person name="Lenhard B."/>
            <person name="Wells C."/>
            <person name="Kodzius R."/>
            <person name="Shimokawa K."/>
            <person name="Bajic V.B."/>
            <person name="Brenner S.E."/>
            <person name="Batalov S."/>
            <person name="Forrest A.R."/>
            <person name="Zavolan M."/>
            <person name="Davis M.J."/>
            <person name="Wilming L.G."/>
            <person name="Aidinis V."/>
            <person name="Allen J.E."/>
            <person name="Ambesi-Impiombato A."/>
            <person name="Apweiler R."/>
            <person name="Aturaliya R.N."/>
            <person name="Bailey T.L."/>
            <person name="Bansal M."/>
            <person name="Baxter L."/>
            <person name="Beisel K.W."/>
            <person name="Bersano T."/>
            <person name="Bono H."/>
            <person name="Chalk A.M."/>
            <person name="Chiu K.P."/>
            <person name="Choudhary V."/>
            <person name="Christoffels A."/>
            <person name="Clutterbuck D.R."/>
            <person name="Crowe M.L."/>
            <person name="Dalla E."/>
            <person name="Dalrymple B.P."/>
            <person name="de Bono B."/>
            <person name="Della Gatta G."/>
            <person name="di Bernardo D."/>
            <person name="Down T."/>
            <person name="Engstrom P."/>
            <person name="Fagiolini M."/>
            <person name="Faulkner G."/>
            <person name="Fletcher C.F."/>
            <person name="Fukushima T."/>
            <person name="Furuno M."/>
            <person name="Futaki S."/>
            <person name="Gariboldi M."/>
            <person name="Georgii-Hemming P."/>
            <person name="Gingeras T.R."/>
            <person name="Gojobori T."/>
            <person name="Green R.E."/>
            <person name="Gustincich S."/>
            <person name="Harbers M."/>
            <person name="Hayashi Y."/>
            <person name="Hensch T.K."/>
            <person name="Hirokawa N."/>
            <person name="Hill D."/>
            <person name="Huminiecki L."/>
            <person name="Iacono M."/>
            <person name="Ikeo K."/>
            <person name="Iwama A."/>
            <person name="Ishikawa T."/>
            <person name="Jakt M."/>
            <person name="Kanapin A."/>
            <person name="Katoh M."/>
            <person name="Kawasawa Y."/>
            <person name="Kelso J."/>
            <person name="Kitamura H."/>
            <person name="Kitano H."/>
            <person name="Kollias G."/>
            <person name="Krishnan S.P."/>
            <person name="Kruger A."/>
            <person name="Kummerfeld S.K."/>
            <person name="Kurochkin I.V."/>
            <person name="Lareau L.F."/>
            <person name="Lazarevic D."/>
            <person name="Lipovich L."/>
            <person name="Liu J."/>
            <person name="Liuni S."/>
            <person name="McWilliam S."/>
            <person name="Madan Babu M."/>
            <person name="Madera M."/>
            <person name="Marchionni L."/>
            <person name="Matsuda H."/>
            <person name="Matsuzawa S."/>
            <person name="Miki H."/>
            <person name="Mignone F."/>
            <person name="Miyake S."/>
            <person name="Morris K."/>
            <person name="Mottagui-Tabar S."/>
            <person name="Mulder N."/>
            <person name="Nakano N."/>
            <person name="Nakauchi H."/>
            <person name="Ng P."/>
            <person name="Nilsson R."/>
            <person name="Nishiguchi S."/>
            <person name="Nishikawa S."/>
            <person name="Nori F."/>
            <person name="Ohara O."/>
            <person name="Okazaki Y."/>
            <person name="Orlando V."/>
            <person name="Pang K.C."/>
            <person name="Pavan W.J."/>
            <person name="Pavesi G."/>
            <person name="Pesole G."/>
            <person name="Petrovsky N."/>
            <person name="Piazza S."/>
            <person name="Reed J."/>
            <person name="Reid J.F."/>
            <person name="Ring B.Z."/>
            <person name="Ringwald M."/>
            <person name="Rost B."/>
            <person name="Ruan Y."/>
            <person name="Salzberg S.L."/>
            <person name="Sandelin A."/>
            <person name="Schneider C."/>
            <person name="Schoenbach C."/>
            <person name="Sekiguchi K."/>
            <person name="Semple C.A."/>
            <person name="Seno S."/>
            <person name="Sessa L."/>
            <person name="Sheng Y."/>
            <person name="Shibata Y."/>
            <person name="Shimada H."/>
            <person name="Shimada K."/>
            <person name="Silva D."/>
            <person name="Sinclair B."/>
            <person name="Sperling S."/>
            <person name="Stupka E."/>
            <person name="Sugiura K."/>
            <person name="Sultana R."/>
            <person name="Takenaka Y."/>
            <person name="Taki K."/>
            <person name="Tammoja K."/>
            <person name="Tan S.L."/>
            <person name="Tang S."/>
            <person name="Taylor M.S."/>
            <person name="Tegner J."/>
            <person name="Teichmann S.A."/>
            <person name="Ueda H.R."/>
            <person name="van Nimwegen E."/>
            <person name="Verardo R."/>
            <person name="Wei C.L."/>
            <person name="Yagi K."/>
            <person name="Yamanishi H."/>
            <person name="Zabarovsky E."/>
            <person name="Zhu S."/>
            <person name="Zimmer A."/>
            <person name="Hide W."/>
            <person name="Bult C."/>
            <person name="Grimmond S.M."/>
            <person name="Teasdale R.D."/>
            <person name="Liu E.T."/>
            <person name="Brusic V."/>
            <person name="Quackenbush J."/>
            <person name="Wahlestedt C."/>
            <person name="Mattick J.S."/>
            <person name="Hume D.A."/>
            <person name="Kai C."/>
            <person name="Sasaki D."/>
            <person name="Tomaru Y."/>
            <person name="Fukuda S."/>
            <person name="Kanamori-Katayama M."/>
            <person name="Suzuki M."/>
            <person name="Aoki J."/>
            <person name="Arakawa T."/>
            <person name="Iida J."/>
            <person name="Imamura K."/>
            <person name="Itoh M."/>
            <person name="Kato T."/>
            <person name="Kawaji H."/>
            <person name="Kawagashira N."/>
            <person name="Kawashima T."/>
            <person name="Kojima M."/>
            <person name="Kondo S."/>
            <person name="Konno H."/>
            <person name="Nakano K."/>
            <person name="Ninomiya N."/>
            <person name="Nishio T."/>
            <person name="Okada M."/>
            <person name="Plessy C."/>
            <person name="Shibata K."/>
            <person name="Shiraki T."/>
            <person name="Suzuki S."/>
            <person name="Tagami M."/>
            <person name="Waki K."/>
            <person name="Watahiki A."/>
            <person name="Okamura-Oho Y."/>
            <person name="Suzuki H."/>
            <person name="Kawai J."/>
            <person name="Hayashizaki Y."/>
        </authorList>
    </citation>
    <scope>NUCLEOTIDE SEQUENCE [LARGE SCALE MRNA]</scope>
    <source>
        <strain>C57BL/6J</strain>
        <tissue>Head</tissue>
    </source>
</reference>
<reference key="2">
    <citation type="journal article" date="2004" name="Genome Res.">
        <title>The status, quality, and expansion of the NIH full-length cDNA project: the Mammalian Gene Collection (MGC).</title>
        <authorList>
            <consortium name="The MGC Project Team"/>
        </authorList>
    </citation>
    <scope>NUCLEOTIDE SEQUENCE [LARGE SCALE MRNA]</scope>
</reference>
<reference key="3">
    <citation type="journal article" date="2011" name="Osteoarthritis Cartilage">
        <title>Snorc is a novel cartilage specific small membrane proteoglycan expressed in differentiating and articular chondrocytes.</title>
        <authorList>
            <person name="Heinonen J."/>
            <person name="Taipaleenmaeki H."/>
            <person name="Roering P."/>
            <person name="Takatalo M."/>
            <person name="Harkness L."/>
            <person name="Sandholm J."/>
            <person name="Uusitalo-Jaervinen H."/>
            <person name="Kassem M."/>
            <person name="Kiviranta I."/>
            <person name="Laitala-Leinonen T."/>
            <person name="Saeaemaenen A.M."/>
        </authorList>
    </citation>
    <scope>CHARACTERIZATION</scope>
    <scope>TISSUE SPECIFICITY</scope>
    <scope>INDUCTION BY BMP2</scope>
    <scope>DEVELOPMENTAL STAGE</scope>
    <scope>SUBCELLULAR LOCATION</scope>
</reference>
<reference key="4">
    <citation type="journal article" date="2017" name="Osteoarthritis Cartilage">
        <title>Defects in chondrocyte maturation and secondary ossification in mouse knee joint epiphyses due to Snorc deficiency.</title>
        <authorList>
            <person name="Heinonen J."/>
            <person name="Zhang F.P."/>
            <person name="Surmann-Schmitt C."/>
            <person name="Honkala S."/>
            <person name="Stock M."/>
            <person name="Poutanen M."/>
            <person name="Saeaemaenen A.M."/>
        </authorList>
    </citation>
    <scope>FUNCTION</scope>
    <scope>DISRUPTION PHENOTYPE</scope>
    <scope>TISSUE SPECIFICITY</scope>
    <scope>SUBCELLULAR LOCATION</scope>
</reference>